<accession>O30173</accession>
<name>Y063_ARCFU</name>
<sequence>MDVEVANMAAKLRVRGLKLPNAIVVSTAILSDSVLITKDRGIRYEGLEILTPEEFVEKYLM</sequence>
<proteinExistence type="inferred from homology"/>
<organism>
    <name type="scientific">Archaeoglobus fulgidus (strain ATCC 49558 / DSM 4304 / JCM 9628 / NBRC 100126 / VC-16)</name>
    <dbReference type="NCBI Taxonomy" id="224325"/>
    <lineage>
        <taxon>Archaea</taxon>
        <taxon>Methanobacteriati</taxon>
        <taxon>Methanobacteriota</taxon>
        <taxon>Archaeoglobi</taxon>
        <taxon>Archaeoglobales</taxon>
        <taxon>Archaeoglobaceae</taxon>
        <taxon>Archaeoglobus</taxon>
    </lineage>
</organism>
<reference key="1">
    <citation type="journal article" date="1997" name="Nature">
        <title>The complete genome sequence of the hyperthermophilic, sulphate-reducing archaeon Archaeoglobus fulgidus.</title>
        <authorList>
            <person name="Klenk H.-P."/>
            <person name="Clayton R.A."/>
            <person name="Tomb J.-F."/>
            <person name="White O."/>
            <person name="Nelson K.E."/>
            <person name="Ketchum K.A."/>
            <person name="Dodson R.J."/>
            <person name="Gwinn M.L."/>
            <person name="Hickey E.K."/>
            <person name="Peterson J.D."/>
            <person name="Richardson D.L."/>
            <person name="Kerlavage A.R."/>
            <person name="Graham D.E."/>
            <person name="Kyrpides N.C."/>
            <person name="Fleischmann R.D."/>
            <person name="Quackenbush J."/>
            <person name="Lee N.H."/>
            <person name="Sutton G.G."/>
            <person name="Gill S.R."/>
            <person name="Kirkness E.F."/>
            <person name="Dougherty B.A."/>
            <person name="McKenney K."/>
            <person name="Adams M.D."/>
            <person name="Loftus B.J."/>
            <person name="Peterson S.N."/>
            <person name="Reich C.I."/>
            <person name="McNeil L.K."/>
            <person name="Badger J.H."/>
            <person name="Glodek A."/>
            <person name="Zhou L."/>
            <person name="Overbeek R."/>
            <person name="Gocayne J.D."/>
            <person name="Weidman J.F."/>
            <person name="McDonald L.A."/>
            <person name="Utterback T.R."/>
            <person name="Cotton M.D."/>
            <person name="Spriggs T."/>
            <person name="Artiach P."/>
            <person name="Kaine B.P."/>
            <person name="Sykes S.M."/>
            <person name="Sadow P.W."/>
            <person name="D'Andrea K.P."/>
            <person name="Bowman C."/>
            <person name="Fujii C."/>
            <person name="Garland S.A."/>
            <person name="Mason T.M."/>
            <person name="Olsen G.J."/>
            <person name="Fraser C.M."/>
            <person name="Smith H.O."/>
            <person name="Woese C.R."/>
            <person name="Venter J.C."/>
        </authorList>
    </citation>
    <scope>NUCLEOTIDE SEQUENCE [LARGE SCALE GENOMIC DNA]</scope>
    <source>
        <strain>ATCC 49558 / DSM 4304 / JCM 9628 / NBRC 100126 / VC-16</strain>
    </source>
</reference>
<feature type="signal peptide" evidence="1">
    <location>
        <begin position="1"/>
        <end position="30"/>
    </location>
</feature>
<feature type="chain" id="PRO_0000013636" description="Uncharacterized protein AF_0063">
    <location>
        <begin position="31"/>
        <end position="61"/>
    </location>
</feature>
<dbReference type="EMBL" id="AE000782">
    <property type="protein sequence ID" value="AAB91176.1"/>
    <property type="molecule type" value="Genomic_DNA"/>
</dbReference>
<dbReference type="PIR" id="G69257">
    <property type="entry name" value="G69257"/>
</dbReference>
<dbReference type="SMR" id="O30173"/>
<dbReference type="STRING" id="224325.AF_0063"/>
<dbReference type="PaxDb" id="224325-AF_0063"/>
<dbReference type="EnsemblBacteria" id="AAB91176">
    <property type="protein sequence ID" value="AAB91176"/>
    <property type="gene ID" value="AF_0063"/>
</dbReference>
<dbReference type="KEGG" id="afu:AF_0063"/>
<dbReference type="eggNOG" id="arCOG08620">
    <property type="taxonomic scope" value="Archaea"/>
</dbReference>
<dbReference type="HOGENOM" id="CLU_2911282_0_0_2"/>
<dbReference type="Proteomes" id="UP000002199">
    <property type="component" value="Chromosome"/>
</dbReference>
<dbReference type="InterPro" id="IPR029060">
    <property type="entry name" value="PIN-like_dom_sf"/>
</dbReference>
<dbReference type="SUPFAM" id="SSF88723">
    <property type="entry name" value="PIN domain-like"/>
    <property type="match status" value="1"/>
</dbReference>
<protein>
    <recommendedName>
        <fullName>Uncharacterized protein AF_0063</fullName>
    </recommendedName>
</protein>
<evidence type="ECO:0000255" key="1"/>
<keyword id="KW-1185">Reference proteome</keyword>
<keyword id="KW-0732">Signal</keyword>
<gene>
    <name type="ordered locus">AF_0063</name>
</gene>